<evidence type="ECO:0000250" key="1"/>
<evidence type="ECO:0000256" key="2">
    <source>
        <dbReference type="SAM" id="MobiDB-lite"/>
    </source>
</evidence>
<evidence type="ECO:0000305" key="3"/>
<name>METB_MYCTO</name>
<gene>
    <name type="primary">metB</name>
    <name type="ordered locus">MT1110</name>
</gene>
<protein>
    <recommendedName>
        <fullName>Cystathionine gamma-synthase</fullName>
        <shortName>CGS</shortName>
        <ecNumber>2.5.1.48</ecNumber>
    </recommendedName>
    <alternativeName>
        <fullName>O-succinylhomoserine (thiol)-lyase</fullName>
    </alternativeName>
</protein>
<keyword id="KW-0028">Amino-acid biosynthesis</keyword>
<keyword id="KW-0963">Cytoplasm</keyword>
<keyword id="KW-0486">Methionine biosynthesis</keyword>
<keyword id="KW-0663">Pyridoxal phosphate</keyword>
<keyword id="KW-1185">Reference proteome</keyword>
<keyword id="KW-0808">Transferase</keyword>
<proteinExistence type="inferred from homology"/>
<dbReference type="EC" id="2.5.1.48"/>
<dbReference type="EMBL" id="AE000516">
    <property type="protein sequence ID" value="AAK45366.1"/>
    <property type="molecule type" value="Genomic_DNA"/>
</dbReference>
<dbReference type="PIR" id="E70894">
    <property type="entry name" value="E70894"/>
</dbReference>
<dbReference type="RefSeq" id="WP_003405736.1">
    <property type="nucleotide sequence ID" value="NZ_KK341227.1"/>
</dbReference>
<dbReference type="SMR" id="P9WGB6"/>
<dbReference type="KEGG" id="mtc:MT1110"/>
<dbReference type="PATRIC" id="fig|83331.31.peg.1195"/>
<dbReference type="HOGENOM" id="CLU_018986_2_0_11"/>
<dbReference type="UniPathway" id="UPA00051">
    <property type="reaction ID" value="UER00077"/>
</dbReference>
<dbReference type="Proteomes" id="UP000001020">
    <property type="component" value="Chromosome"/>
</dbReference>
<dbReference type="GO" id="GO:0005737">
    <property type="term" value="C:cytoplasm"/>
    <property type="evidence" value="ECO:0007669"/>
    <property type="project" value="UniProtKB-SubCell"/>
</dbReference>
<dbReference type="GO" id="GO:0004123">
    <property type="term" value="F:cystathionine gamma-lyase activity"/>
    <property type="evidence" value="ECO:0007669"/>
    <property type="project" value="TreeGrafter"/>
</dbReference>
<dbReference type="GO" id="GO:0003962">
    <property type="term" value="F:cystathionine gamma-synthase activity"/>
    <property type="evidence" value="ECO:0007669"/>
    <property type="project" value="UniProtKB-EC"/>
</dbReference>
<dbReference type="GO" id="GO:0030170">
    <property type="term" value="F:pyridoxal phosphate binding"/>
    <property type="evidence" value="ECO:0007669"/>
    <property type="project" value="InterPro"/>
</dbReference>
<dbReference type="GO" id="GO:0019343">
    <property type="term" value="P:cysteine biosynthetic process via cystathionine"/>
    <property type="evidence" value="ECO:0007669"/>
    <property type="project" value="TreeGrafter"/>
</dbReference>
<dbReference type="GO" id="GO:0009086">
    <property type="term" value="P:methionine biosynthetic process"/>
    <property type="evidence" value="ECO:0007669"/>
    <property type="project" value="UniProtKB-KW"/>
</dbReference>
<dbReference type="GO" id="GO:0019346">
    <property type="term" value="P:transsulfuration"/>
    <property type="evidence" value="ECO:0007669"/>
    <property type="project" value="InterPro"/>
</dbReference>
<dbReference type="CDD" id="cd00614">
    <property type="entry name" value="CGS_like"/>
    <property type="match status" value="1"/>
</dbReference>
<dbReference type="FunFam" id="3.90.1150.10:FF:000008">
    <property type="entry name" value="Cystathionine gamma-synthase"/>
    <property type="match status" value="1"/>
</dbReference>
<dbReference type="FunFam" id="3.40.640.10:FF:000009">
    <property type="entry name" value="Cystathionine gamma-synthase homolog"/>
    <property type="match status" value="1"/>
</dbReference>
<dbReference type="Gene3D" id="3.90.1150.10">
    <property type="entry name" value="Aspartate Aminotransferase, domain 1"/>
    <property type="match status" value="1"/>
</dbReference>
<dbReference type="Gene3D" id="3.40.640.10">
    <property type="entry name" value="Type I PLP-dependent aspartate aminotransferase-like (Major domain)"/>
    <property type="match status" value="1"/>
</dbReference>
<dbReference type="InterPro" id="IPR000277">
    <property type="entry name" value="Cys/Met-Metab_PyrdxlP-dep_enz"/>
</dbReference>
<dbReference type="InterPro" id="IPR054542">
    <property type="entry name" value="Cys_met_metab_PP"/>
</dbReference>
<dbReference type="InterPro" id="IPR015424">
    <property type="entry name" value="PyrdxlP-dep_Trfase"/>
</dbReference>
<dbReference type="InterPro" id="IPR015421">
    <property type="entry name" value="PyrdxlP-dep_Trfase_major"/>
</dbReference>
<dbReference type="InterPro" id="IPR015422">
    <property type="entry name" value="PyrdxlP-dep_Trfase_small"/>
</dbReference>
<dbReference type="NCBIfam" id="NF005871">
    <property type="entry name" value="PRK07811.1"/>
    <property type="match status" value="1"/>
</dbReference>
<dbReference type="PANTHER" id="PTHR11808:SF15">
    <property type="entry name" value="CYSTATHIONINE GAMMA-LYASE"/>
    <property type="match status" value="1"/>
</dbReference>
<dbReference type="PANTHER" id="PTHR11808">
    <property type="entry name" value="TRANS-SULFURATION ENZYME FAMILY MEMBER"/>
    <property type="match status" value="1"/>
</dbReference>
<dbReference type="Pfam" id="PF01053">
    <property type="entry name" value="Cys_Met_Meta_PP"/>
    <property type="match status" value="1"/>
</dbReference>
<dbReference type="PIRSF" id="PIRSF001434">
    <property type="entry name" value="CGS"/>
    <property type="match status" value="1"/>
</dbReference>
<dbReference type="SUPFAM" id="SSF53383">
    <property type="entry name" value="PLP-dependent transferases"/>
    <property type="match status" value="1"/>
</dbReference>
<dbReference type="PROSITE" id="PS00868">
    <property type="entry name" value="CYS_MET_METAB_PP"/>
    <property type="match status" value="1"/>
</dbReference>
<organism>
    <name type="scientific">Mycobacterium tuberculosis (strain CDC 1551 / Oshkosh)</name>
    <dbReference type="NCBI Taxonomy" id="83331"/>
    <lineage>
        <taxon>Bacteria</taxon>
        <taxon>Bacillati</taxon>
        <taxon>Actinomycetota</taxon>
        <taxon>Actinomycetes</taxon>
        <taxon>Mycobacteriales</taxon>
        <taxon>Mycobacteriaceae</taxon>
        <taxon>Mycobacterium</taxon>
        <taxon>Mycobacterium tuberculosis complex</taxon>
    </lineage>
</organism>
<reference key="1">
    <citation type="journal article" date="2002" name="J. Bacteriol.">
        <title>Whole-genome comparison of Mycobacterium tuberculosis clinical and laboratory strains.</title>
        <authorList>
            <person name="Fleischmann R.D."/>
            <person name="Alland D."/>
            <person name="Eisen J.A."/>
            <person name="Carpenter L."/>
            <person name="White O."/>
            <person name="Peterson J.D."/>
            <person name="DeBoy R.T."/>
            <person name="Dodson R.J."/>
            <person name="Gwinn M.L."/>
            <person name="Haft D.H."/>
            <person name="Hickey E.K."/>
            <person name="Kolonay J.F."/>
            <person name="Nelson W.C."/>
            <person name="Umayam L.A."/>
            <person name="Ermolaeva M.D."/>
            <person name="Salzberg S.L."/>
            <person name="Delcher A."/>
            <person name="Utterback T.R."/>
            <person name="Weidman J.F."/>
            <person name="Khouri H.M."/>
            <person name="Gill J."/>
            <person name="Mikula A."/>
            <person name="Bishai W."/>
            <person name="Jacobs W.R. Jr."/>
            <person name="Venter J.C."/>
            <person name="Fraser C.M."/>
        </authorList>
    </citation>
    <scope>NUCLEOTIDE SEQUENCE [LARGE SCALE GENOMIC DNA]</scope>
    <source>
        <strain>CDC 1551 / Oshkosh</strain>
    </source>
</reference>
<accession>P9WGB6</accession>
<accession>L0T5M9</accession>
<accession>O53427</accession>
<accession>P66875</accession>
<sequence>MSEDRTGHQGISGPATRAIHAGYRPDPATGAVNVPIYASSTFAQDGVGGLRGGFEYARTGNPTRAALEASLAAVEEGAFARAFSSGMAATDCALRAMLRPGDHVVIPDDAYGGTFRLIDKVFTRWDVQYTPVRLADLDAVGAAITPRTRLIWVETPTNPLLSIADITAIAELGTDRSAKVLVDNTFASPALQQPLRLGADVVLHSTTKYIGGHSDVVGGALVTNDEELDEEFAFLQNGAGAVPGPFDAYLTMRGLKTLVLRMQRHSENACAVAEFLADHPSVSSVLYPGLPSHPGHEIAARQMRGFGGMVSVRMRAGRRAAQDLCAKTRVFILAESLGGVESLIEHPSAMTHASTAGSQLEVPDDLVRLSVGIEDIADLLGDLEQALG</sequence>
<feature type="chain" id="PRO_0000428390" description="Cystathionine gamma-synthase">
    <location>
        <begin position="1"/>
        <end position="388"/>
    </location>
</feature>
<feature type="region of interest" description="Disordered" evidence="2">
    <location>
        <begin position="1"/>
        <end position="24"/>
    </location>
</feature>
<feature type="modified residue" description="N6-(pyridoxal phosphate)lysine" evidence="1">
    <location>
        <position position="208"/>
    </location>
</feature>
<comment type="function">
    <text evidence="1">Catalyzes the formation of L-cystathionine from O-succinyl-L-homoserine (OSHS) and L-cysteine, via a gamma-replacement reaction.</text>
</comment>
<comment type="catalytic activity">
    <reaction>
        <text>O-succinyl-L-homoserine + L-cysteine = L,L-cystathionine + succinate + H(+)</text>
        <dbReference type="Rhea" id="RHEA:20397"/>
        <dbReference type="ChEBI" id="CHEBI:15378"/>
        <dbReference type="ChEBI" id="CHEBI:30031"/>
        <dbReference type="ChEBI" id="CHEBI:35235"/>
        <dbReference type="ChEBI" id="CHEBI:57661"/>
        <dbReference type="ChEBI" id="CHEBI:58161"/>
        <dbReference type="EC" id="2.5.1.48"/>
    </reaction>
</comment>
<comment type="cofactor">
    <cofactor evidence="1">
        <name>pyridoxal 5'-phosphate</name>
        <dbReference type="ChEBI" id="CHEBI:597326"/>
    </cofactor>
    <text evidence="1">Binds 1 pyridoxal phosphate per subunit.</text>
</comment>
<comment type="pathway">
    <text>Amino-acid biosynthesis; L-methionine biosynthesis via de novo pathway; L-cystathionine from O-succinyl-L-homoserine: step 1/1.</text>
</comment>
<comment type="subunit">
    <text evidence="1">Homotetramer.</text>
</comment>
<comment type="subcellular location">
    <subcellularLocation>
        <location evidence="1">Cytoplasm</location>
    </subcellularLocation>
</comment>
<comment type="similarity">
    <text evidence="3">Belongs to the trans-sulfuration enzymes family.</text>
</comment>